<reference key="1">
    <citation type="journal article" date="2004" name="Proc. Natl. Acad. Sci. U.S.A.">
        <title>Structural flexibility in the Burkholderia mallei genome.</title>
        <authorList>
            <person name="Nierman W.C."/>
            <person name="DeShazer D."/>
            <person name="Kim H.S."/>
            <person name="Tettelin H."/>
            <person name="Nelson K.E."/>
            <person name="Feldblyum T.V."/>
            <person name="Ulrich R.L."/>
            <person name="Ronning C.M."/>
            <person name="Brinkac L.M."/>
            <person name="Daugherty S.C."/>
            <person name="Davidsen T.D."/>
            <person name="DeBoy R.T."/>
            <person name="Dimitrov G."/>
            <person name="Dodson R.J."/>
            <person name="Durkin A.S."/>
            <person name="Gwinn M.L."/>
            <person name="Haft D.H."/>
            <person name="Khouri H.M."/>
            <person name="Kolonay J.F."/>
            <person name="Madupu R."/>
            <person name="Mohammoud Y."/>
            <person name="Nelson W.C."/>
            <person name="Radune D."/>
            <person name="Romero C.M."/>
            <person name="Sarria S."/>
            <person name="Selengut J."/>
            <person name="Shamblin C."/>
            <person name="Sullivan S.A."/>
            <person name="White O."/>
            <person name="Yu Y."/>
            <person name="Zafar N."/>
            <person name="Zhou L."/>
            <person name="Fraser C.M."/>
        </authorList>
    </citation>
    <scope>NUCLEOTIDE SEQUENCE [LARGE SCALE GENOMIC DNA]</scope>
    <source>
        <strain>ATCC 23344</strain>
    </source>
</reference>
<gene>
    <name evidence="1" type="primary">betB</name>
    <name type="ordered locus">BMAA0915</name>
</gene>
<organism>
    <name type="scientific">Burkholderia mallei (strain ATCC 23344)</name>
    <dbReference type="NCBI Taxonomy" id="243160"/>
    <lineage>
        <taxon>Bacteria</taxon>
        <taxon>Pseudomonadati</taxon>
        <taxon>Pseudomonadota</taxon>
        <taxon>Betaproteobacteria</taxon>
        <taxon>Burkholderiales</taxon>
        <taxon>Burkholderiaceae</taxon>
        <taxon>Burkholderia</taxon>
        <taxon>pseudomallei group</taxon>
    </lineage>
</organism>
<proteinExistence type="inferred from homology"/>
<dbReference type="EC" id="1.2.1.8" evidence="1"/>
<dbReference type="EMBL" id="CP000011">
    <property type="protein sequence ID" value="AAU46695.1"/>
    <property type="molecule type" value="Genomic_DNA"/>
</dbReference>
<dbReference type="RefSeq" id="WP_004187839.1">
    <property type="nucleotide sequence ID" value="NC_006349.2"/>
</dbReference>
<dbReference type="RefSeq" id="YP_105601.1">
    <property type="nucleotide sequence ID" value="NC_006349.2"/>
</dbReference>
<dbReference type="SMR" id="Q62CH7"/>
<dbReference type="GeneID" id="92976421"/>
<dbReference type="KEGG" id="bma:BMAA0915"/>
<dbReference type="PATRIC" id="fig|243160.12.peg.4431"/>
<dbReference type="eggNOG" id="COG1012">
    <property type="taxonomic scope" value="Bacteria"/>
</dbReference>
<dbReference type="HOGENOM" id="CLU_005391_0_0_4"/>
<dbReference type="UniPathway" id="UPA00529">
    <property type="reaction ID" value="UER00386"/>
</dbReference>
<dbReference type="Proteomes" id="UP000006693">
    <property type="component" value="Chromosome 2"/>
</dbReference>
<dbReference type="GO" id="GO:0008802">
    <property type="term" value="F:betaine-aldehyde dehydrogenase (NAD+) activity"/>
    <property type="evidence" value="ECO:0007669"/>
    <property type="project" value="UniProtKB-UniRule"/>
</dbReference>
<dbReference type="GO" id="GO:0046872">
    <property type="term" value="F:metal ion binding"/>
    <property type="evidence" value="ECO:0007669"/>
    <property type="project" value="UniProtKB-KW"/>
</dbReference>
<dbReference type="GO" id="GO:0019285">
    <property type="term" value="P:glycine betaine biosynthetic process from choline"/>
    <property type="evidence" value="ECO:0007669"/>
    <property type="project" value="UniProtKB-UniRule"/>
</dbReference>
<dbReference type="CDD" id="cd07090">
    <property type="entry name" value="ALDH_F9_TMBADH"/>
    <property type="match status" value="1"/>
</dbReference>
<dbReference type="FunFam" id="3.40.309.10:FF:000014">
    <property type="entry name" value="NAD/NADP-dependent betaine aldehyde dehydrogenase"/>
    <property type="match status" value="1"/>
</dbReference>
<dbReference type="FunFam" id="3.40.605.10:FF:000007">
    <property type="entry name" value="NAD/NADP-dependent betaine aldehyde dehydrogenase"/>
    <property type="match status" value="1"/>
</dbReference>
<dbReference type="Gene3D" id="3.40.605.10">
    <property type="entry name" value="Aldehyde Dehydrogenase, Chain A, domain 1"/>
    <property type="match status" value="1"/>
</dbReference>
<dbReference type="Gene3D" id="3.40.309.10">
    <property type="entry name" value="Aldehyde Dehydrogenase, Chain A, domain 2"/>
    <property type="match status" value="1"/>
</dbReference>
<dbReference type="HAMAP" id="MF_00804">
    <property type="entry name" value="BADH"/>
    <property type="match status" value="1"/>
</dbReference>
<dbReference type="InterPro" id="IPR016161">
    <property type="entry name" value="Ald_DH/histidinol_DH"/>
</dbReference>
<dbReference type="InterPro" id="IPR016163">
    <property type="entry name" value="Ald_DH_C"/>
</dbReference>
<dbReference type="InterPro" id="IPR016160">
    <property type="entry name" value="Ald_DH_CS_CYS"/>
</dbReference>
<dbReference type="InterPro" id="IPR029510">
    <property type="entry name" value="Ald_DH_CS_GLU"/>
</dbReference>
<dbReference type="InterPro" id="IPR016162">
    <property type="entry name" value="Ald_DH_N"/>
</dbReference>
<dbReference type="InterPro" id="IPR015590">
    <property type="entry name" value="Aldehyde_DH_dom"/>
</dbReference>
<dbReference type="InterPro" id="IPR011264">
    <property type="entry name" value="BADH"/>
</dbReference>
<dbReference type="NCBIfam" id="TIGR01804">
    <property type="entry name" value="BADH"/>
    <property type="match status" value="1"/>
</dbReference>
<dbReference type="NCBIfam" id="NF009725">
    <property type="entry name" value="PRK13252.1"/>
    <property type="match status" value="1"/>
</dbReference>
<dbReference type="PANTHER" id="PTHR11699">
    <property type="entry name" value="ALDEHYDE DEHYDROGENASE-RELATED"/>
    <property type="match status" value="1"/>
</dbReference>
<dbReference type="Pfam" id="PF00171">
    <property type="entry name" value="Aldedh"/>
    <property type="match status" value="1"/>
</dbReference>
<dbReference type="SUPFAM" id="SSF53720">
    <property type="entry name" value="ALDH-like"/>
    <property type="match status" value="1"/>
</dbReference>
<dbReference type="PROSITE" id="PS00070">
    <property type="entry name" value="ALDEHYDE_DEHYDR_CYS"/>
    <property type="match status" value="1"/>
</dbReference>
<dbReference type="PROSITE" id="PS00687">
    <property type="entry name" value="ALDEHYDE_DEHYDR_GLU"/>
    <property type="match status" value="1"/>
</dbReference>
<feature type="chain" id="PRO_0000056539" description="Betaine aldehyde dehydrogenase">
    <location>
        <begin position="1"/>
        <end position="489"/>
    </location>
</feature>
<feature type="active site" description="Charge relay system" evidence="1">
    <location>
        <position position="162"/>
    </location>
</feature>
<feature type="active site" description="Proton acceptor" evidence="1">
    <location>
        <position position="251"/>
    </location>
</feature>
<feature type="active site" description="Nucleophile" evidence="1">
    <location>
        <position position="285"/>
    </location>
</feature>
<feature type="active site" description="Charge relay system" evidence="1">
    <location>
        <position position="463"/>
    </location>
</feature>
<feature type="binding site" evidence="1">
    <location>
        <position position="26"/>
    </location>
    <ligand>
        <name>K(+)</name>
        <dbReference type="ChEBI" id="CHEBI:29103"/>
        <label>1</label>
    </ligand>
</feature>
<feature type="binding site" evidence="1">
    <location>
        <position position="93"/>
    </location>
    <ligand>
        <name>K(+)</name>
        <dbReference type="ChEBI" id="CHEBI:29103"/>
        <label>1</label>
    </ligand>
</feature>
<feature type="binding site" evidence="1">
    <location>
        <begin position="150"/>
        <end position="152"/>
    </location>
    <ligand>
        <name>NAD(+)</name>
        <dbReference type="ChEBI" id="CHEBI:57540"/>
    </ligand>
</feature>
<feature type="binding site" evidence="1">
    <location>
        <begin position="176"/>
        <end position="179"/>
    </location>
    <ligand>
        <name>NAD(+)</name>
        <dbReference type="ChEBI" id="CHEBI:57540"/>
    </ligand>
</feature>
<feature type="binding site" evidence="1">
    <location>
        <position position="180"/>
    </location>
    <ligand>
        <name>K(+)</name>
        <dbReference type="ChEBI" id="CHEBI:29103"/>
        <label>1</label>
    </ligand>
</feature>
<feature type="binding site" evidence="1">
    <location>
        <begin position="229"/>
        <end position="232"/>
    </location>
    <ligand>
        <name>NAD(+)</name>
        <dbReference type="ChEBI" id="CHEBI:57540"/>
    </ligand>
</feature>
<feature type="binding site" evidence="1">
    <location>
        <position position="245"/>
    </location>
    <ligand>
        <name>K(+)</name>
        <dbReference type="ChEBI" id="CHEBI:29103"/>
        <label>2</label>
    </ligand>
</feature>
<feature type="binding site" evidence="1">
    <location>
        <position position="253"/>
    </location>
    <ligand>
        <name>NAD(+)</name>
        <dbReference type="ChEBI" id="CHEBI:57540"/>
    </ligand>
</feature>
<feature type="binding site" description="covalent" evidence="1">
    <location>
        <position position="285"/>
    </location>
    <ligand>
        <name>NAD(+)</name>
        <dbReference type="ChEBI" id="CHEBI:57540"/>
    </ligand>
</feature>
<feature type="binding site" evidence="1">
    <location>
        <position position="386"/>
    </location>
    <ligand>
        <name>NAD(+)</name>
        <dbReference type="ChEBI" id="CHEBI:57540"/>
    </ligand>
</feature>
<feature type="binding site" evidence="1">
    <location>
        <position position="456"/>
    </location>
    <ligand>
        <name>K(+)</name>
        <dbReference type="ChEBI" id="CHEBI:29103"/>
        <label>2</label>
    </ligand>
</feature>
<feature type="binding site" evidence="1">
    <location>
        <position position="459"/>
    </location>
    <ligand>
        <name>K(+)</name>
        <dbReference type="ChEBI" id="CHEBI:29103"/>
        <label>2</label>
    </ligand>
</feature>
<feature type="site" description="Seems to be a necessary countercharge to the potassium cations" evidence="1">
    <location>
        <position position="247"/>
    </location>
</feature>
<feature type="modified residue" description="Cysteine sulfenic acid (-SOH)" evidence="1">
    <location>
        <position position="285"/>
    </location>
</feature>
<name>BETB_BURMA</name>
<protein>
    <recommendedName>
        <fullName evidence="1">Betaine aldehyde dehydrogenase</fullName>
        <shortName evidence="1">BADH</shortName>
        <ecNumber evidence="1">1.2.1.8</ecNumber>
    </recommendedName>
</protein>
<sequence length="489" mass="52173">MSVYGLQRLYIAGAHADATSGKTFDTFDPATGELLARVQQASADDVDRAVASAREGQREWAAMTAMQRSRILRRAVELLRERNDALAELEMRDTGKPIAETRAVDIVTGADVIEYYAGLATAIEGLQVPLRPESFVYTRREPLGVCAGIGAWNYPIQIACWKSAPALAAGNAMIFKPSEVTPLSALKLAEIYTEAGVPAGVFNVVQGDGSVGALLSAHPGIAKVSFTGGVETGKKVMSLAGASSLKEVTMELGGKSPLIVFDDADLDRAADIAVTANFFSAGQVCTNGTRVFVQQAVKDAFVERVLARVARIRAGKPSDPDTNFGPLASAAQLDKVLGYIDSGKAEGAKLLAGGARLVNDHFASGQYVAPTVFGDCRDDMRIVREEIFGPVMSILSFETEDEAIARANATDYGLAAGVVTENLSRAHRAIHRLEAGICWINTWGESPAEMPVGGYKQSGVGRENGITTLEHYTRIKSVQVELGRYQPVF</sequence>
<comment type="function">
    <text evidence="1">Involved in the biosynthesis of the osmoprotectant glycine betaine. Catalyzes the irreversible oxidation of betaine aldehyde to the corresponding acid.</text>
</comment>
<comment type="catalytic activity">
    <reaction evidence="1">
        <text>betaine aldehyde + NAD(+) + H2O = glycine betaine + NADH + 2 H(+)</text>
        <dbReference type="Rhea" id="RHEA:15305"/>
        <dbReference type="ChEBI" id="CHEBI:15377"/>
        <dbReference type="ChEBI" id="CHEBI:15378"/>
        <dbReference type="ChEBI" id="CHEBI:15710"/>
        <dbReference type="ChEBI" id="CHEBI:17750"/>
        <dbReference type="ChEBI" id="CHEBI:57540"/>
        <dbReference type="ChEBI" id="CHEBI:57945"/>
        <dbReference type="EC" id="1.2.1.8"/>
    </reaction>
    <physiologicalReaction direction="left-to-right" evidence="1">
        <dbReference type="Rhea" id="RHEA:15306"/>
    </physiologicalReaction>
</comment>
<comment type="cofactor">
    <cofactor evidence="1">
        <name>K(+)</name>
        <dbReference type="ChEBI" id="CHEBI:29103"/>
    </cofactor>
    <text evidence="1">Binds 2 potassium ions per subunit.</text>
</comment>
<comment type="pathway">
    <text evidence="1">Amine and polyamine biosynthesis; betaine biosynthesis via choline pathway; betaine from betaine aldehyde: step 1/1.</text>
</comment>
<comment type="subunit">
    <text evidence="1">Dimer of dimers.</text>
</comment>
<comment type="similarity">
    <text evidence="1">Belongs to the aldehyde dehydrogenase family.</text>
</comment>
<accession>Q62CH7</accession>
<evidence type="ECO:0000255" key="1">
    <source>
        <dbReference type="HAMAP-Rule" id="MF_00804"/>
    </source>
</evidence>
<keyword id="KW-0479">Metal-binding</keyword>
<keyword id="KW-0520">NAD</keyword>
<keyword id="KW-0521">NADP</keyword>
<keyword id="KW-0558">Oxidation</keyword>
<keyword id="KW-0560">Oxidoreductase</keyword>
<keyword id="KW-0630">Potassium</keyword>
<keyword id="KW-1185">Reference proteome</keyword>